<reference key="1">
    <citation type="journal article" date="2007" name="Genome Res.">
        <title>Genome sequence of a proteolytic (Group I) Clostridium botulinum strain Hall A and comparative analysis of the clostridial genomes.</title>
        <authorList>
            <person name="Sebaihia M."/>
            <person name="Peck M.W."/>
            <person name="Minton N.P."/>
            <person name="Thomson N.R."/>
            <person name="Holden M.T.G."/>
            <person name="Mitchell W.J."/>
            <person name="Carter A.T."/>
            <person name="Bentley S.D."/>
            <person name="Mason D.R."/>
            <person name="Crossman L."/>
            <person name="Paul C.J."/>
            <person name="Ivens A."/>
            <person name="Wells-Bennik M.H.J."/>
            <person name="Davis I.J."/>
            <person name="Cerdeno-Tarraga A.M."/>
            <person name="Churcher C."/>
            <person name="Quail M.A."/>
            <person name="Chillingworth T."/>
            <person name="Feltwell T."/>
            <person name="Fraser A."/>
            <person name="Goodhead I."/>
            <person name="Hance Z."/>
            <person name="Jagels K."/>
            <person name="Larke N."/>
            <person name="Maddison M."/>
            <person name="Moule S."/>
            <person name="Mungall K."/>
            <person name="Norbertczak H."/>
            <person name="Rabbinowitsch E."/>
            <person name="Sanders M."/>
            <person name="Simmonds M."/>
            <person name="White B."/>
            <person name="Whithead S."/>
            <person name="Parkhill J."/>
        </authorList>
    </citation>
    <scope>NUCLEOTIDE SEQUENCE [LARGE SCALE GENOMIC DNA]</scope>
    <source>
        <strain>Hall / ATCC 3502 / NCTC 13319 / Type A</strain>
    </source>
</reference>
<reference key="2">
    <citation type="journal article" date="2007" name="PLoS ONE">
        <title>Analysis of the neurotoxin complex genes in Clostridium botulinum A1-A4 and B1 strains: BoNT/A3, /Ba4 and /B1 clusters are located within plasmids.</title>
        <authorList>
            <person name="Smith T.J."/>
            <person name="Hill K.K."/>
            <person name="Foley B.T."/>
            <person name="Detter J.C."/>
            <person name="Munk A.C."/>
            <person name="Bruce D.C."/>
            <person name="Doggett N.A."/>
            <person name="Smith L.A."/>
            <person name="Marks J.D."/>
            <person name="Xie G."/>
            <person name="Brettin T.S."/>
        </authorList>
    </citation>
    <scope>NUCLEOTIDE SEQUENCE [LARGE SCALE GENOMIC DNA]</scope>
    <source>
        <strain>Hall / ATCC 3502 / NCTC 13319 / Type A</strain>
    </source>
</reference>
<reference key="3">
    <citation type="journal article" date="1989" name="Biochem. Biophys. Res. Commun.">
        <title>Characterization of botulinum type A neurotoxin gene: delineation of the N-terminal encoding region.</title>
        <authorList>
            <person name="Betley M.J."/>
            <person name="Somers E."/>
            <person name="Dasgupta B.R."/>
        </authorList>
    </citation>
    <scope>NUCLEOTIDE SEQUENCE [GENOMIC DNA] OF 1-35</scope>
    <source>
        <strain>Hall / Type A</strain>
    </source>
</reference>
<reference key="4">
    <citation type="journal article" date="1988" name="Arch. Biochem. Biophys.">
        <title>Botulinum neurotoxin type A: cleavage of the heavy chain into two halves and their partial sequences.</title>
        <authorList>
            <person name="Sathymoorthy V."/>
            <person name="Dasgupta B.R."/>
            <person name="Foley J."/>
            <person name="Niece R.L."/>
        </authorList>
    </citation>
    <scope>PROTEIN SEQUENCE OF 449-475 AND 873-896</scope>
    <source>
        <strain>Hall / Type A</strain>
    </source>
</reference>
<reference key="5">
    <citation type="journal article" date="1993" name="J. Protein Chem.">
        <title>Botulinum type A neurotoxin digested with pepsin yields 132, 97, 72, 45, 42, and 18 kD fragments.</title>
        <authorList>
            <person name="Gimenez J.A."/>
            <person name="DasGupta B.R."/>
        </authorList>
    </citation>
    <scope>PROTEIN SEQUENCE OF 867-880 AND 1148-1219</scope>
    <source>
        <strain>Hall / Type A</strain>
    </source>
</reference>
<reference key="6">
    <citation type="journal article" date="1985" name="J. Biol. Chem.">
        <title>Separation, purification, partial characterization and comparison of the heavy and light chains of botulinum neurotoxin types A, B, and E.</title>
        <authorList>
            <person name="Sathyamoorthy V."/>
            <person name="DasGupta B.R."/>
        </authorList>
    </citation>
    <scope>RELEASED AS DICHAIN</scope>
    <source>
        <strain>Hall / Type A</strain>
    </source>
</reference>
<reference key="7">
    <citation type="journal article" date="1992" name="J. Infect. Dis.">
        <title>Clinical and laboratory comparison of botulism from toxin types A, B, and E in the United States, 1975-1988.</title>
        <authorList>
            <person name="Woodruff B.A."/>
            <person name="Griffin P.M."/>
            <person name="McCroskey L.M."/>
            <person name="Smart J.F."/>
            <person name="Wainwright R.B."/>
            <person name="Bryant R.G."/>
            <person name="Hutwagner L.C."/>
            <person name="Hatheway C.L."/>
        </authorList>
    </citation>
    <scope>HOST RANGE</scope>
    <scope>EPIDEMIOLOGY</scope>
</reference>
<reference key="8">
    <citation type="journal article" date="1993" name="Nature">
        <title>Botulinum neurotoxin A selectively cleaves the synaptic protein SNAP-25.</title>
        <authorList>
            <person name="Blasi J."/>
            <person name="Chapman E.R."/>
            <person name="Link E."/>
            <person name="Binz T."/>
            <person name="Yamasaki S."/>
            <person name="De Camilli P."/>
            <person name="Suedhof T.C."/>
            <person name="Niemann H."/>
            <person name="Jahn R."/>
        </authorList>
    </citation>
    <scope>FUNCTION (BOTULINUM NEUROTOXIN TYPE A AND BOTULINUM NEUROTOXIN A LIGHT CHAIN)</scope>
    <scope>IDENTIFICATION OF SUBSTRATE</scope>
    <scope>CATALYTIC ACTIVITY</scope>
    <scope>ACTIVITY REGULATION</scope>
    <scope>SUBCELLULAR LOCATION (BOTULINUM NEUROTOXIN A LIGHT CHAIN)</scope>
    <scope>MUTAGENESIS OF GLU-224</scope>
    <source>
        <strain>Hall / Type A</strain>
    </source>
</reference>
<reference key="9">
    <citation type="journal article" date="1994" name="J. Biol. Chem.">
        <title>Proteolysis of SNAP-25 by types E and A botulinal neurotoxins.</title>
        <authorList>
            <person name="Binz T."/>
            <person name="Blasi J."/>
            <person name="Yamasaki S."/>
            <person name="Baumeister A."/>
            <person name="Link E."/>
            <person name="Suedhof T.C."/>
            <person name="Jahn R."/>
            <person name="Niemann H."/>
        </authorList>
    </citation>
    <scope>IDENTIFICATION OF SUBSTRATE (BOTULINUM NEUROTOXIN TYPE A AND BOTULINUM NEUROTOXIN A LIGHT CHAIN)</scope>
    <scope>IDENTIFICATION OF SUBSTRATE</scope>
    <scope>CATALYTIC ACTIVITY</scope>
    <scope>SUBCELLULAR LOCATION (BOTULINUM NEUROTOXIN A LIGHT CHAIN)</scope>
    <source>
        <strain>Hall / Type A</strain>
    </source>
</reference>
<reference key="10">
    <citation type="journal article" date="2011" name="J. Biol. Chem.">
        <title>Unique ganglioside recognition strategies for clostridial neurotoxins.</title>
        <authorList>
            <person name="Benson M.A."/>
            <person name="Fu Z."/>
            <person name="Kim J.J."/>
            <person name="Baldwin M.R."/>
        </authorList>
    </citation>
    <scope>FUNCTION (BOTULINUM NEUROTOXIN A HEAVY CHAIN)</scope>
    <scope>GANGLIOSIDE-BINDING</scope>
    <source>
        <strain>Hall / Type A</strain>
    </source>
</reference>
<reference key="11">
    <citation type="journal article" date="2017" name="Pharmacol. Rev.">
        <title>Botulinum neurotoxins: Biology, pharmacology, and toxicology.</title>
        <authorList>
            <person name="Pirazzini M."/>
            <person name="Rossetto O."/>
            <person name="Eleopra R."/>
            <person name="Montecucco C."/>
        </authorList>
    </citation>
    <scope>REVIEW</scope>
</reference>
<reference evidence="24" key="12">
    <citation type="journal article" date="1998" name="Nat. Struct. Biol.">
        <title>Crystal structure of botulinum neurotoxin type A and implications for toxicity.</title>
        <authorList>
            <person name="Lacy D.B."/>
            <person name="Tepp W."/>
            <person name="Cohen A.C."/>
            <person name="Dasgupta B.R."/>
            <person name="Stevens R.C."/>
        </authorList>
    </citation>
    <scope>X-RAY CRYSTALLOGRAPHY (3.3 ANGSTROMS) OF 2-1296</scope>
    <scope>COFACTOR</scope>
    <scope>SUBUNIT</scope>
    <scope>SUBCELLULAR LOCATION (BOTULINUM NEUROTOXIN A LIGHT CHAIN AND BOTULINUM NEUROTOXIN A HEAVY CHAIN)</scope>
    <scope>DOMAIN</scope>
    <scope>DISULFIDE BOND</scope>
    <source>
        <strain>Hall / Type A</strain>
    </source>
</reference>
<reference evidence="22 23" key="13">
    <citation type="journal article" date="2007" name="Nat. Biotechnol.">
        <title>Molecular evolution of antibody cross-reactivity for two subtypes of type A botulinum neurotoxin.</title>
        <authorList>
            <person name="Garcia-Rodriguez C."/>
            <person name="Levy R."/>
            <person name="Arndt J.W."/>
            <person name="Forsyth C.M."/>
            <person name="Razai A."/>
            <person name="Lou J."/>
            <person name="Geren I."/>
            <person name="Stevens R.C."/>
            <person name="Marks J.D."/>
        </authorList>
    </citation>
    <scope>X-RAY CRYSTALLOGRAPHY (2.61 ANGSTROMS) OF 2-1296 IN COMPLEX WITH ZINC AND NEUTRALIZING ANTIBODY FRAGMENTS</scope>
    <scope>COFACTOR</scope>
    <scope>SUBUNIT</scope>
    <scope>DOMAIN</scope>
    <scope>DISULFIDE BONDS</scope>
    <source>
        <strain>Hall / Type A</strain>
    </source>
</reference>
<reference evidence="25" key="14">
    <citation type="journal article" date="2009" name="Biochemistry">
        <title>Glycosylated SV2 and gangliosides as dual receptors for botulinum neurotoxin serotype F.</title>
        <authorList>
            <person name="Fu Z."/>
            <person name="Chen C."/>
            <person name="Barbieri J.T."/>
            <person name="Kim J.J."/>
            <person name="Baldwin M.R."/>
        </authorList>
    </citation>
    <scope>X-RAY CRYSTALLOGRAPHY (1.80 ANGSTROMS) OF 871-1296</scope>
    <scope>FUNCTION (BOTULINUM NEUROTOXIN TYPE A)</scope>
    <scope>FUNCTION (BOTULINUM NEUROTOXIN A HEAVY CHAIN)</scope>
    <scope>SUBCELLULAR LOCATION (BOTULINUM NEUROTOXIN A HEAVY CHAIN)</scope>
    <scope>DOMAIN</scope>
    <source>
        <strain>Hall / Type A</strain>
    </source>
</reference>
<reference evidence="26 27 28 29" key="15">
    <citation type="journal article" date="2011" name="Biochemistry">
        <title>Structural characterization of three novel hydroxamate-based zinc chelating inhibitors of the Clostridium botulinum serotype A neurotoxin light chain metalloprotease reveals a compact binding site resulting from 60/70 loop flexibility.</title>
        <authorList>
            <person name="Thompson A.A."/>
            <person name="Jiao G.S."/>
            <person name="Kim S."/>
            <person name="Thai A."/>
            <person name="Cregar-Hernandez L."/>
            <person name="Margosiak S.A."/>
            <person name="Johnson A.T."/>
            <person name="Han G.W."/>
            <person name="O'Malley S."/>
            <person name="Stevens R.C."/>
        </authorList>
    </citation>
    <scope>X-RAY CRYSTALLOGRAPHY (2.00 ANGSTROMS) OF 3-424 IN COMPLEX WITH ZINC AND INHIBITORS</scope>
    <scope>COFACTOR</scope>
    <scope>ACTIVITY REGULATION</scope>
    <source>
        <strain>Hall / ATCC 3502 / NCTC 13319 / Type A</strain>
    </source>
</reference>
<gene>
    <name evidence="13" type="primary">botA</name>
    <name evidence="14" type="synonym">bna</name>
    <name type="ordered locus">CBO0806</name>
    <name type="ordered locus">CLC_0862</name>
</gene>
<evidence type="ECO:0000250" key="1">
    <source>
        <dbReference type="UniProtKB" id="P0DPI0"/>
    </source>
</evidence>
<evidence type="ECO:0000255" key="2"/>
<evidence type="ECO:0000255" key="3">
    <source>
        <dbReference type="PROSITE-ProRule" id="PRU10095"/>
    </source>
</evidence>
<evidence type="ECO:0000269" key="4">
    <source>
    </source>
</evidence>
<evidence type="ECO:0000269" key="5">
    <source>
    </source>
</evidence>
<evidence type="ECO:0000269" key="6">
    <source>
    </source>
</evidence>
<evidence type="ECO:0000269" key="7">
    <source>
    </source>
</evidence>
<evidence type="ECO:0000269" key="8">
    <source>
    </source>
</evidence>
<evidence type="ECO:0000269" key="9">
    <source>
    </source>
</evidence>
<evidence type="ECO:0000269" key="10">
    <source>
    </source>
</evidence>
<evidence type="ECO:0000269" key="11">
    <source>
    </source>
</evidence>
<evidence type="ECO:0000269" key="12">
    <source>
    </source>
</evidence>
<evidence type="ECO:0000303" key="13">
    <source>
    </source>
</evidence>
<evidence type="ECO:0000303" key="14">
    <source>
    </source>
</evidence>
<evidence type="ECO:0000305" key="15"/>
<evidence type="ECO:0000305" key="16">
    <source>
    </source>
</evidence>
<evidence type="ECO:0000305" key="17">
    <source>
    </source>
</evidence>
<evidence type="ECO:0000305" key="18">
    <source>
    </source>
</evidence>
<evidence type="ECO:0000305" key="19">
    <source>
    </source>
</evidence>
<evidence type="ECO:0000305" key="20">
    <source>
    </source>
</evidence>
<evidence type="ECO:0000305" key="21">
    <source>
    </source>
</evidence>
<evidence type="ECO:0007744" key="22">
    <source>
        <dbReference type="PDB" id="2NYY"/>
    </source>
</evidence>
<evidence type="ECO:0007744" key="23">
    <source>
        <dbReference type="PDB" id="2NZ9"/>
    </source>
</evidence>
<evidence type="ECO:0007744" key="24">
    <source>
        <dbReference type="PDB" id="3BTA"/>
    </source>
</evidence>
<evidence type="ECO:0007744" key="25">
    <source>
        <dbReference type="PDB" id="3FUO"/>
    </source>
</evidence>
<evidence type="ECO:0007744" key="26">
    <source>
        <dbReference type="PDB" id="3QIX"/>
    </source>
</evidence>
<evidence type="ECO:0007744" key="27">
    <source>
        <dbReference type="PDB" id="3QIY"/>
    </source>
</evidence>
<evidence type="ECO:0007744" key="28">
    <source>
        <dbReference type="PDB" id="3QIZ"/>
    </source>
</evidence>
<evidence type="ECO:0007744" key="29">
    <source>
        <dbReference type="PDB" id="3QJ0"/>
    </source>
</evidence>
<evidence type="ECO:0007829" key="30">
    <source>
        <dbReference type="PDB" id="2NYY"/>
    </source>
</evidence>
<evidence type="ECO:0007829" key="31">
    <source>
        <dbReference type="PDB" id="3BTA"/>
    </source>
</evidence>
<evidence type="ECO:0007829" key="32">
    <source>
        <dbReference type="PDB" id="3C88"/>
    </source>
</evidence>
<evidence type="ECO:0007829" key="33">
    <source>
        <dbReference type="PDB" id="3C8B"/>
    </source>
</evidence>
<evidence type="ECO:0007829" key="34">
    <source>
        <dbReference type="PDB" id="3DDA"/>
    </source>
</evidence>
<evidence type="ECO:0007829" key="35">
    <source>
        <dbReference type="PDB" id="3DS9"/>
    </source>
</evidence>
<evidence type="ECO:0007829" key="36">
    <source>
        <dbReference type="PDB" id="3DSE"/>
    </source>
</evidence>
<evidence type="ECO:0007829" key="37">
    <source>
        <dbReference type="PDB" id="3FUO"/>
    </source>
</evidence>
<evidence type="ECO:0007829" key="38">
    <source>
        <dbReference type="PDB" id="3K3Q"/>
    </source>
</evidence>
<evidence type="ECO:0007829" key="39">
    <source>
        <dbReference type="PDB" id="3QW5"/>
    </source>
</evidence>
<evidence type="ECO:0007829" key="40">
    <source>
        <dbReference type="PDB" id="3QW8"/>
    </source>
</evidence>
<evidence type="ECO:0007829" key="41">
    <source>
        <dbReference type="PDB" id="4EL4"/>
    </source>
</evidence>
<evidence type="ECO:0007829" key="42">
    <source>
        <dbReference type="PDB" id="4ELC"/>
    </source>
</evidence>
<evidence type="ECO:0007829" key="43">
    <source>
        <dbReference type="PDB" id="5L21"/>
    </source>
</evidence>
<evidence type="ECO:0007829" key="44">
    <source>
        <dbReference type="PDB" id="6UI1"/>
    </source>
</evidence>
<evidence type="ECO:0007829" key="45">
    <source>
        <dbReference type="PDB" id="6UL6"/>
    </source>
</evidence>
<evidence type="ECO:0007829" key="46">
    <source>
        <dbReference type="PDB" id="7KY2"/>
    </source>
</evidence>
<evidence type="ECO:0007829" key="47">
    <source>
        <dbReference type="PDB" id="7L6V"/>
    </source>
</evidence>
<dbReference type="EC" id="3.4.24.69" evidence="10"/>
<dbReference type="EMBL" id="AM412317">
    <property type="protein sequence ID" value="CAL82360.1"/>
    <property type="molecule type" value="Genomic_DNA"/>
</dbReference>
<dbReference type="EMBL" id="CP000727">
    <property type="protein sequence ID" value="ABS38337.1"/>
    <property type="molecule type" value="Genomic_DNA"/>
</dbReference>
<dbReference type="EMBL" id="M27892">
    <property type="protein sequence ID" value="AAA23269.1"/>
    <property type="molecule type" value="Genomic_DNA"/>
</dbReference>
<dbReference type="PIR" id="A35294">
    <property type="entry name" value="BTCLAB"/>
</dbReference>
<dbReference type="RefSeq" id="YP_001253342.1">
    <property type="nucleotide sequence ID" value="NC_009495.1"/>
</dbReference>
<dbReference type="RefSeq" id="YP_001386738.1">
    <property type="nucleotide sequence ID" value="NC_009698.1"/>
</dbReference>
<dbReference type="PDB" id="2NYY">
    <property type="method" value="X-ray"/>
    <property type="resolution" value="2.61 A"/>
    <property type="chains" value="A=2-1296"/>
</dbReference>
<dbReference type="PDB" id="2NZ9">
    <property type="method" value="X-ray"/>
    <property type="resolution" value="3.79 A"/>
    <property type="chains" value="A/B=2-1296"/>
</dbReference>
<dbReference type="PDB" id="3BTA">
    <property type="method" value="X-ray"/>
    <property type="resolution" value="3.20 A"/>
    <property type="chains" value="A=2-1296"/>
</dbReference>
<dbReference type="PDB" id="3BWI">
    <property type="method" value="X-ray"/>
    <property type="resolution" value="1.70 A"/>
    <property type="chains" value="A=1-424"/>
</dbReference>
<dbReference type="PDB" id="3C88">
    <property type="method" value="X-ray"/>
    <property type="resolution" value="1.60 A"/>
    <property type="chains" value="A=1-424"/>
</dbReference>
<dbReference type="PDB" id="3C89">
    <property type="method" value="X-ray"/>
    <property type="resolution" value="1.58 A"/>
    <property type="chains" value="A=1-424"/>
</dbReference>
<dbReference type="PDB" id="3C8A">
    <property type="method" value="X-ray"/>
    <property type="resolution" value="1.52 A"/>
    <property type="chains" value="A=1-424"/>
</dbReference>
<dbReference type="PDB" id="3C8B">
    <property type="method" value="X-ray"/>
    <property type="resolution" value="1.47 A"/>
    <property type="chains" value="A=1-424"/>
</dbReference>
<dbReference type="PDB" id="3DDA">
    <property type="method" value="X-ray"/>
    <property type="resolution" value="1.50 A"/>
    <property type="chains" value="A=1-424"/>
</dbReference>
<dbReference type="PDB" id="3DDB">
    <property type="method" value="X-ray"/>
    <property type="resolution" value="1.60 A"/>
    <property type="chains" value="A=1-424"/>
</dbReference>
<dbReference type="PDB" id="3DS9">
    <property type="method" value="X-ray"/>
    <property type="resolution" value="1.76 A"/>
    <property type="chains" value="A=1-417"/>
</dbReference>
<dbReference type="PDB" id="3DSE">
    <property type="method" value="X-ray"/>
    <property type="resolution" value="1.90 A"/>
    <property type="chains" value="A=1-417"/>
</dbReference>
<dbReference type="PDB" id="3FUO">
    <property type="method" value="X-ray"/>
    <property type="resolution" value="1.80 A"/>
    <property type="chains" value="A=871-1296"/>
</dbReference>
<dbReference type="PDB" id="3K3Q">
    <property type="method" value="X-ray"/>
    <property type="resolution" value="2.60 A"/>
    <property type="chains" value="B=3-250, C=251-425"/>
</dbReference>
<dbReference type="PDB" id="3QIX">
    <property type="method" value="X-ray"/>
    <property type="resolution" value="2.41 A"/>
    <property type="chains" value="A/B=3-424"/>
</dbReference>
<dbReference type="PDB" id="3QIY">
    <property type="method" value="X-ray"/>
    <property type="resolution" value="2.30 A"/>
    <property type="chains" value="A=3-424"/>
</dbReference>
<dbReference type="PDB" id="3QIZ">
    <property type="method" value="X-ray"/>
    <property type="resolution" value="2.00 A"/>
    <property type="chains" value="A=3-424"/>
</dbReference>
<dbReference type="PDB" id="3QJ0">
    <property type="method" value="X-ray"/>
    <property type="resolution" value="2.30 A"/>
    <property type="chains" value="A=3-424"/>
</dbReference>
<dbReference type="PDB" id="3QW5">
    <property type="method" value="X-ray"/>
    <property type="resolution" value="1.60 A"/>
    <property type="chains" value="A=1-424"/>
</dbReference>
<dbReference type="PDB" id="3QW6">
    <property type="method" value="X-ray"/>
    <property type="resolution" value="1.60 A"/>
    <property type="chains" value="A=1-424"/>
</dbReference>
<dbReference type="PDB" id="3QW7">
    <property type="method" value="X-ray"/>
    <property type="resolution" value="1.50 A"/>
    <property type="chains" value="A=1-424"/>
</dbReference>
<dbReference type="PDB" id="3QW8">
    <property type="method" value="X-ray"/>
    <property type="resolution" value="1.60 A"/>
    <property type="chains" value="A=1-424"/>
</dbReference>
<dbReference type="PDB" id="4EJ5">
    <property type="method" value="X-ray"/>
    <property type="resolution" value="1.87 A"/>
    <property type="chains" value="A=1-425"/>
</dbReference>
<dbReference type="PDB" id="4EL4">
    <property type="method" value="X-ray"/>
    <property type="resolution" value="1.20 A"/>
    <property type="chains" value="A=1-425"/>
</dbReference>
<dbReference type="PDB" id="4ELC">
    <property type="method" value="X-ray"/>
    <property type="resolution" value="1.80 A"/>
    <property type="chains" value="A=1-425"/>
</dbReference>
<dbReference type="PDB" id="4KS6">
    <property type="method" value="X-ray"/>
    <property type="resolution" value="1.93 A"/>
    <property type="chains" value="A=1-425"/>
</dbReference>
<dbReference type="PDB" id="4KTX">
    <property type="method" value="X-ray"/>
    <property type="resolution" value="2.59 A"/>
    <property type="chains" value="A=1-425"/>
</dbReference>
<dbReference type="PDB" id="4KUF">
    <property type="method" value="X-ray"/>
    <property type="resolution" value="1.70 A"/>
    <property type="chains" value="A=1-425"/>
</dbReference>
<dbReference type="PDB" id="4ZJX">
    <property type="method" value="X-ray"/>
    <property type="resolution" value="1.94 A"/>
    <property type="chains" value="A=1-424"/>
</dbReference>
<dbReference type="PDB" id="5L21">
    <property type="method" value="X-ray"/>
    <property type="resolution" value="1.68 A"/>
    <property type="chains" value="A=872-1296"/>
</dbReference>
<dbReference type="PDB" id="6UI1">
    <property type="method" value="X-ray"/>
    <property type="resolution" value="2.20 A"/>
    <property type="chains" value="A=1-871"/>
</dbReference>
<dbReference type="PDB" id="6UL6">
    <property type="method" value="X-ray"/>
    <property type="resolution" value="2.02 A"/>
    <property type="chains" value="A=1-871"/>
</dbReference>
<dbReference type="PDB" id="7KY2">
    <property type="method" value="X-ray"/>
    <property type="resolution" value="2.78 A"/>
    <property type="chains" value="A/B=3-420"/>
</dbReference>
<dbReference type="PDB" id="7L6V">
    <property type="method" value="X-ray"/>
    <property type="resolution" value="2.01 A"/>
    <property type="chains" value="A=1-420"/>
</dbReference>
<dbReference type="PDB" id="7N18">
    <property type="method" value="X-ray"/>
    <property type="resolution" value="2.03 A"/>
    <property type="chains" value="A/B=1-425"/>
</dbReference>
<dbReference type="PDB" id="8HKH">
    <property type="method" value="X-ray"/>
    <property type="resolution" value="2.70 A"/>
    <property type="chains" value="A/B=2-421"/>
</dbReference>
<dbReference type="PDBsum" id="2NYY"/>
<dbReference type="PDBsum" id="2NZ9"/>
<dbReference type="PDBsum" id="3BTA"/>
<dbReference type="PDBsum" id="3BWI"/>
<dbReference type="PDBsum" id="3C88"/>
<dbReference type="PDBsum" id="3C89"/>
<dbReference type="PDBsum" id="3C8A"/>
<dbReference type="PDBsum" id="3C8B"/>
<dbReference type="PDBsum" id="3DDA"/>
<dbReference type="PDBsum" id="3DDB"/>
<dbReference type="PDBsum" id="3DS9"/>
<dbReference type="PDBsum" id="3DSE"/>
<dbReference type="PDBsum" id="3FUO"/>
<dbReference type="PDBsum" id="3K3Q"/>
<dbReference type="PDBsum" id="3QIX"/>
<dbReference type="PDBsum" id="3QIY"/>
<dbReference type="PDBsum" id="3QIZ"/>
<dbReference type="PDBsum" id="3QJ0"/>
<dbReference type="PDBsum" id="3QW5"/>
<dbReference type="PDBsum" id="3QW6"/>
<dbReference type="PDBsum" id="3QW7"/>
<dbReference type="PDBsum" id="3QW8"/>
<dbReference type="PDBsum" id="4EJ5"/>
<dbReference type="PDBsum" id="4EL4"/>
<dbReference type="PDBsum" id="4ELC"/>
<dbReference type="PDBsum" id="4KS6"/>
<dbReference type="PDBsum" id="4KTX"/>
<dbReference type="PDBsum" id="4KUF"/>
<dbReference type="PDBsum" id="4ZJX"/>
<dbReference type="PDBsum" id="5L21"/>
<dbReference type="PDBsum" id="6UI1"/>
<dbReference type="PDBsum" id="6UL6"/>
<dbReference type="PDBsum" id="7KY2"/>
<dbReference type="PDBsum" id="7L6V"/>
<dbReference type="PDBsum" id="7N18"/>
<dbReference type="PDBsum" id="8HKH"/>
<dbReference type="EMDB" id="EMD-43786"/>
<dbReference type="SMR" id="P0DPI1"/>
<dbReference type="BindingDB" id="P0DPI1"/>
<dbReference type="ChEMBL" id="CHEMBL5344"/>
<dbReference type="UniLectin" id="P0DPI1"/>
<dbReference type="ABCD" id="P0DPI1">
    <property type="antibodies" value="24 sequenced antibodies"/>
</dbReference>
<dbReference type="GeneID" id="5185061"/>
<dbReference type="KEGG" id="cbh:CLC_0862"/>
<dbReference type="KEGG" id="cbo:CBO0806"/>
<dbReference type="BRENDA" id="3.4.24.69">
    <property type="organism ID" value="1462"/>
</dbReference>
<dbReference type="EvolutionaryTrace" id="P0DPI1"/>
<dbReference type="PRO" id="PR:P0DPI1"/>
<dbReference type="Proteomes" id="UP000001986">
    <property type="component" value="Chromosome"/>
</dbReference>
<dbReference type="GO" id="GO:0005576">
    <property type="term" value="C:extracellular region"/>
    <property type="evidence" value="ECO:0007669"/>
    <property type="project" value="UniProtKB-SubCell"/>
</dbReference>
<dbReference type="GO" id="GO:0044161">
    <property type="term" value="C:host cell cytoplasmic vesicle"/>
    <property type="evidence" value="ECO:0007669"/>
    <property type="project" value="UniProtKB-SubCell"/>
</dbReference>
<dbReference type="GO" id="GO:0044164">
    <property type="term" value="C:host cell cytosol"/>
    <property type="evidence" value="ECO:0007669"/>
    <property type="project" value="UniProtKB-SubCell"/>
</dbReference>
<dbReference type="GO" id="GO:0020002">
    <property type="term" value="C:host cell plasma membrane"/>
    <property type="evidence" value="ECO:0007669"/>
    <property type="project" value="UniProtKB-KW"/>
</dbReference>
<dbReference type="GO" id="GO:0044231">
    <property type="term" value="C:host cell presynaptic membrane"/>
    <property type="evidence" value="ECO:0007669"/>
    <property type="project" value="UniProtKB-SubCell"/>
</dbReference>
<dbReference type="GO" id="GO:0016020">
    <property type="term" value="C:membrane"/>
    <property type="evidence" value="ECO:0007669"/>
    <property type="project" value="UniProtKB-KW"/>
</dbReference>
<dbReference type="GO" id="GO:0004222">
    <property type="term" value="F:metalloendopeptidase activity"/>
    <property type="evidence" value="ECO:0007669"/>
    <property type="project" value="UniProtKB-EC"/>
</dbReference>
<dbReference type="GO" id="GO:0008320">
    <property type="term" value="F:protein transmembrane transporter activity"/>
    <property type="evidence" value="ECO:0007669"/>
    <property type="project" value="InterPro"/>
</dbReference>
<dbReference type="GO" id="GO:0090729">
    <property type="term" value="F:toxin activity"/>
    <property type="evidence" value="ECO:0007669"/>
    <property type="project" value="UniProtKB-KW"/>
</dbReference>
<dbReference type="GO" id="GO:0008270">
    <property type="term" value="F:zinc ion binding"/>
    <property type="evidence" value="ECO:0007669"/>
    <property type="project" value="InterPro"/>
</dbReference>
<dbReference type="GO" id="GO:0006508">
    <property type="term" value="P:proteolysis"/>
    <property type="evidence" value="ECO:0007669"/>
    <property type="project" value="UniProtKB-KW"/>
</dbReference>
<dbReference type="CDD" id="cd23388">
    <property type="entry name" value="Toxin_R_bind_C_BoNTA_like"/>
    <property type="match status" value="1"/>
</dbReference>
<dbReference type="FunFam" id="2.60.120.200:FF:000184">
    <property type="entry name" value="Botulinum neurotoxin type A"/>
    <property type="match status" value="1"/>
</dbReference>
<dbReference type="FunFam" id="2.80.10.50:FF:000070">
    <property type="entry name" value="Botulinum neurotoxin type A"/>
    <property type="match status" value="1"/>
</dbReference>
<dbReference type="FunFam" id="3.90.1240.10:FF:000002">
    <property type="entry name" value="Botulinum neurotoxin type A"/>
    <property type="match status" value="1"/>
</dbReference>
<dbReference type="Gene3D" id="1.20.58.540">
    <property type="match status" value="1"/>
</dbReference>
<dbReference type="Gene3D" id="2.60.120.200">
    <property type="match status" value="1"/>
</dbReference>
<dbReference type="Gene3D" id="2.80.10.50">
    <property type="match status" value="1"/>
</dbReference>
<dbReference type="Gene3D" id="1.20.1120.10">
    <property type="entry name" value="Clostridium botulinum neurotoxin b, 'coiled-coil' domain"/>
    <property type="match status" value="1"/>
</dbReference>
<dbReference type="Gene3D" id="4.10.1280.10">
    <property type="entry name" value="Clostridium neurotoxins"/>
    <property type="match status" value="1"/>
</dbReference>
<dbReference type="Gene3D" id="3.90.1240.10">
    <property type="entry name" value="Metalloproteases ('zincins'), catalytic domain like"/>
    <property type="match status" value="1"/>
</dbReference>
<dbReference type="InterPro" id="IPR000395">
    <property type="entry name" value="Bot/tetX_LC"/>
</dbReference>
<dbReference type="InterPro" id="IPR036248">
    <property type="entry name" value="Clostridium_toxin_transloc"/>
</dbReference>
<dbReference type="InterPro" id="IPR013320">
    <property type="entry name" value="ConA-like_dom_sf"/>
</dbReference>
<dbReference type="InterPro" id="IPR011065">
    <property type="entry name" value="Kunitz_inhibitor_STI-like_sf"/>
</dbReference>
<dbReference type="InterPro" id="IPR013104">
    <property type="entry name" value="Toxin_rcpt-bd_C"/>
</dbReference>
<dbReference type="InterPro" id="IPR012928">
    <property type="entry name" value="Toxin_rcpt-bd_N"/>
</dbReference>
<dbReference type="InterPro" id="IPR012500">
    <property type="entry name" value="Toxin_trans"/>
</dbReference>
<dbReference type="Pfam" id="PF01742">
    <property type="entry name" value="Peptidase_M27"/>
    <property type="match status" value="1"/>
</dbReference>
<dbReference type="Pfam" id="PF07951">
    <property type="entry name" value="Toxin_R_bind_C"/>
    <property type="match status" value="1"/>
</dbReference>
<dbReference type="Pfam" id="PF07953">
    <property type="entry name" value="Toxin_R_bind_N"/>
    <property type="match status" value="1"/>
</dbReference>
<dbReference type="Pfam" id="PF07952">
    <property type="entry name" value="Toxin_trans"/>
    <property type="match status" value="1"/>
</dbReference>
<dbReference type="PRINTS" id="PR00760">
    <property type="entry name" value="BONTOXILYSIN"/>
</dbReference>
<dbReference type="SUPFAM" id="SSF58091">
    <property type="entry name" value="Clostridium neurotoxins, 'coiled-coil' domain"/>
    <property type="match status" value="1"/>
</dbReference>
<dbReference type="SUPFAM" id="SSF49899">
    <property type="entry name" value="Concanavalin A-like lectins/glucanases"/>
    <property type="match status" value="1"/>
</dbReference>
<dbReference type="SUPFAM" id="SSF55486">
    <property type="entry name" value="Metalloproteases ('zincins'), catalytic domain"/>
    <property type="match status" value="1"/>
</dbReference>
<dbReference type="SUPFAM" id="SSF50386">
    <property type="entry name" value="STI-like"/>
    <property type="match status" value="1"/>
</dbReference>
<dbReference type="PROSITE" id="PS00142">
    <property type="entry name" value="ZINC_PROTEASE"/>
    <property type="match status" value="1"/>
</dbReference>
<feature type="initiator methionine" description="Removed" evidence="1">
    <location>
        <position position="1"/>
    </location>
</feature>
<feature type="chain" id="PRO_0000444903" description="Botulinum neurotoxin type A">
    <location>
        <begin position="2"/>
        <end position="1296"/>
    </location>
</feature>
<feature type="chain" id="PRO_0000308906" description="Botulinum neurotoxin A light chain">
    <location>
        <begin position="2"/>
        <end position="448"/>
    </location>
</feature>
<feature type="chain" id="PRO_0000308907" description="Botulinum neurotoxin A heavy chain">
    <location>
        <begin position="449"/>
        <end position="1296"/>
    </location>
</feature>
<feature type="transmembrane region" description="Helical" evidence="2">
    <location>
        <begin position="627"/>
        <end position="647"/>
    </location>
</feature>
<feature type="transmembrane region" description="Helical" evidence="2">
    <location>
        <begin position="656"/>
        <end position="676"/>
    </location>
</feature>
<feature type="region of interest" description="Translocation domain (TD)" evidence="16 21">
    <location>
        <begin position="449"/>
        <end position="872"/>
    </location>
</feature>
<feature type="region of interest" description="Belt" evidence="1">
    <location>
        <begin position="492"/>
        <end position="545"/>
    </location>
</feature>
<feature type="region of interest" description="N-terminus of receptor binding domain (N-RBD)" evidence="16 21">
    <location>
        <begin position="873"/>
        <end position="1092"/>
    </location>
</feature>
<feature type="region of interest" description="C-terminus of receptor binding domain (C-RBD)" evidence="16 21">
    <location>
        <begin position="1093"/>
        <end position="1296"/>
    </location>
</feature>
<feature type="short sequence motif" description="Host ganglioside-binding motif" evidence="1">
    <location>
        <begin position="1264"/>
        <end position="1267"/>
    </location>
</feature>
<feature type="active site" evidence="3">
    <location>
        <position position="224"/>
    </location>
</feature>
<feature type="binding site" evidence="3 5 21 22 23 24 26 27 28 29">
    <location>
        <position position="223"/>
    </location>
    <ligand>
        <name>Zn(2+)</name>
        <dbReference type="ChEBI" id="CHEBI:29105"/>
        <note>catalytic</note>
    </ligand>
</feature>
<feature type="binding site" evidence="3 5 21 22 23 24 26 27 28 29">
    <location>
        <position position="227"/>
    </location>
    <ligand>
        <name>Zn(2+)</name>
        <dbReference type="ChEBI" id="CHEBI:29105"/>
        <note>catalytic</note>
    </ligand>
</feature>
<feature type="binding site" evidence="3 5 22 23 24 26 27 28 29">
    <location>
        <position position="262"/>
    </location>
    <ligand>
        <name>Zn(2+)</name>
        <dbReference type="ChEBI" id="CHEBI:29105"/>
        <note>catalytic</note>
    </ligand>
</feature>
<feature type="disulfide bond" description="Interchain (between light and heavy chains)" evidence="5 12 22 23 24">
    <location>
        <begin position="430"/>
        <end position="454"/>
    </location>
</feature>
<feature type="disulfide bond" evidence="5 12 23 24">
    <location>
        <begin position="1235"/>
        <end position="1280"/>
    </location>
</feature>
<feature type="mutagenesis site" description="Light chain no longer cleaves SNAP25." evidence="10">
    <original>E</original>
    <variation>K</variation>
    <variation>Q</variation>
    <location>
        <position position="224"/>
    </location>
</feature>
<feature type="sequence conflict" description="In Ref. 4; AA sequence." evidence="15" ref="4">
    <original>T</original>
    <variation>L</variation>
    <location>
        <position position="876"/>
    </location>
</feature>
<feature type="sequence conflict" description="In Ref. 4; AA sequence." evidence="15" ref="4">
    <original>S</original>
    <variation>K</variation>
    <location>
        <position position="892"/>
    </location>
</feature>
<feature type="sequence conflict" description="In Ref. 5; AA sequence." evidence="15" ref="5">
    <original>S</original>
    <variation>Y</variation>
    <location>
        <position position="1218"/>
    </location>
</feature>
<feature type="strand" evidence="33">
    <location>
        <begin position="3"/>
        <end position="6"/>
    </location>
</feature>
<feature type="strand" evidence="41">
    <location>
        <begin position="16"/>
        <end position="23"/>
    </location>
</feature>
<feature type="strand" evidence="34">
    <location>
        <begin position="26"/>
        <end position="28"/>
    </location>
</feature>
<feature type="strand" evidence="41">
    <location>
        <begin position="33"/>
        <end position="39"/>
    </location>
</feature>
<feature type="strand" evidence="41">
    <location>
        <begin position="42"/>
        <end position="48"/>
    </location>
</feature>
<feature type="strand" evidence="32">
    <location>
        <begin position="51"/>
        <end position="53"/>
    </location>
</feature>
<feature type="helix" evidence="33">
    <location>
        <begin position="54"/>
        <end position="56"/>
    </location>
</feature>
<feature type="turn" evidence="33">
    <location>
        <begin position="64"/>
        <end position="66"/>
    </location>
</feature>
<feature type="turn" evidence="35">
    <location>
        <begin position="68"/>
        <end position="70"/>
    </location>
</feature>
<feature type="turn" evidence="41">
    <location>
        <begin position="75"/>
        <end position="78"/>
    </location>
</feature>
<feature type="helix" evidence="41">
    <location>
        <begin position="81"/>
        <end position="99"/>
    </location>
</feature>
<feature type="helix" evidence="41">
    <location>
        <begin position="102"/>
        <end position="113"/>
    </location>
</feature>
<feature type="strand" evidence="41">
    <location>
        <begin position="126"/>
        <end position="128"/>
    </location>
</feature>
<feature type="helix" evidence="41">
    <location>
        <begin position="131"/>
        <end position="133"/>
    </location>
</feature>
<feature type="strand" evidence="41">
    <location>
        <begin position="134"/>
        <end position="138"/>
    </location>
</feature>
<feature type="turn" evidence="46">
    <location>
        <begin position="140"/>
        <end position="142"/>
    </location>
</feature>
<feature type="strand" evidence="41">
    <location>
        <begin position="144"/>
        <end position="148"/>
    </location>
</feature>
<feature type="strand" evidence="41">
    <location>
        <begin position="150"/>
        <end position="155"/>
    </location>
</feature>
<feature type="strand" evidence="41">
    <location>
        <begin position="164"/>
        <end position="166"/>
    </location>
</feature>
<feature type="turn" evidence="42">
    <location>
        <begin position="170"/>
        <end position="172"/>
    </location>
</feature>
<feature type="turn" evidence="41">
    <location>
        <begin position="175"/>
        <end position="177"/>
    </location>
</feature>
<feature type="strand" evidence="41">
    <location>
        <begin position="184"/>
        <end position="187"/>
    </location>
</feature>
<feature type="strand" evidence="41">
    <location>
        <begin position="190"/>
        <end position="196"/>
    </location>
</feature>
<feature type="helix" evidence="41">
    <location>
        <begin position="200"/>
        <end position="203"/>
    </location>
</feature>
<feature type="strand" evidence="47">
    <location>
        <begin position="205"/>
        <end position="208"/>
    </location>
</feature>
<feature type="strand" evidence="36">
    <location>
        <begin position="211"/>
        <end position="214"/>
    </location>
</feature>
<feature type="helix" evidence="41">
    <location>
        <begin position="217"/>
        <end position="232"/>
    </location>
</feature>
<feature type="strand" evidence="41">
    <location>
        <begin position="242"/>
        <end position="244"/>
    </location>
</feature>
<feature type="helix" evidence="41">
    <location>
        <begin position="249"/>
        <end position="253"/>
    </location>
</feature>
<feature type="strand" evidence="41">
    <location>
        <begin position="257"/>
        <end position="259"/>
    </location>
</feature>
<feature type="helix" evidence="41">
    <location>
        <begin position="260"/>
        <end position="266"/>
    </location>
</feature>
<feature type="helix" evidence="41">
    <location>
        <begin position="268"/>
        <end position="273"/>
    </location>
</feature>
<feature type="helix" evidence="41">
    <location>
        <begin position="276"/>
        <end position="299"/>
    </location>
</feature>
<feature type="strand" evidence="41">
    <location>
        <begin position="305"/>
        <end position="308"/>
    </location>
</feature>
<feature type="helix" evidence="41">
    <location>
        <begin position="310"/>
        <end position="321"/>
    </location>
</feature>
<feature type="strand" evidence="39">
    <location>
        <begin position="327"/>
        <end position="329"/>
    </location>
</feature>
<feature type="helix" evidence="41">
    <location>
        <begin position="335"/>
        <end position="346"/>
    </location>
</feature>
<feature type="helix" evidence="41">
    <location>
        <begin position="351"/>
        <end position="358"/>
    </location>
</feature>
<feature type="strand" evidence="41">
    <location>
        <begin position="366"/>
        <end position="368"/>
    </location>
</feature>
<feature type="strand" evidence="41">
    <location>
        <begin position="372"/>
        <end position="375"/>
    </location>
</feature>
<feature type="turn" evidence="41">
    <location>
        <begin position="381"/>
        <end position="383"/>
    </location>
</feature>
<feature type="turn" evidence="41">
    <location>
        <begin position="386"/>
        <end position="388"/>
    </location>
</feature>
<feature type="strand" evidence="38">
    <location>
        <begin position="393"/>
        <end position="395"/>
    </location>
</feature>
<feature type="helix" evidence="47">
    <location>
        <begin position="396"/>
        <end position="398"/>
    </location>
</feature>
<feature type="helix" evidence="41">
    <location>
        <begin position="402"/>
        <end position="404"/>
    </location>
</feature>
<feature type="turn" evidence="41">
    <location>
        <begin position="406"/>
        <end position="409"/>
    </location>
</feature>
<feature type="helix" evidence="41">
    <location>
        <begin position="410"/>
        <end position="412"/>
    </location>
</feature>
<feature type="strand" evidence="41">
    <location>
        <begin position="414"/>
        <end position="418"/>
    </location>
</feature>
<feature type="turn" evidence="40">
    <location>
        <begin position="420"/>
        <end position="422"/>
    </location>
</feature>
<feature type="strand" evidence="45">
    <location>
        <begin position="425"/>
        <end position="431"/>
    </location>
</feature>
<feature type="helix" evidence="45">
    <location>
        <begin position="433"/>
        <end position="436"/>
    </location>
</feature>
<feature type="strand" evidence="45">
    <location>
        <begin position="453"/>
        <end position="458"/>
    </location>
</feature>
<feature type="helix" evidence="45">
    <location>
        <begin position="459"/>
        <end position="461"/>
    </location>
</feature>
<feature type="helix" evidence="45">
    <location>
        <begin position="468"/>
        <end position="470"/>
    </location>
</feature>
<feature type="strand" evidence="45">
    <location>
        <begin position="479"/>
        <end position="481"/>
    </location>
</feature>
<feature type="helix" evidence="45">
    <location>
        <begin position="496"/>
        <end position="505"/>
    </location>
</feature>
<feature type="strand" evidence="45">
    <location>
        <begin position="542"/>
        <end position="547"/>
    </location>
</feature>
<feature type="helix" evidence="45">
    <location>
        <begin position="550"/>
        <end position="555"/>
    </location>
</feature>
<feature type="strand" evidence="30">
    <location>
        <begin position="563"/>
        <end position="565"/>
    </location>
</feature>
<feature type="strand" evidence="45">
    <location>
        <begin position="567"/>
        <end position="570"/>
    </location>
</feature>
<feature type="helix" evidence="45">
    <location>
        <begin position="572"/>
        <end position="577"/>
    </location>
</feature>
<feature type="strand" evidence="45">
    <location>
        <begin position="581"/>
        <end position="583"/>
    </location>
</feature>
<feature type="helix" evidence="45">
    <location>
        <begin position="588"/>
        <end position="595"/>
    </location>
</feature>
<feature type="helix" evidence="45">
    <location>
        <begin position="600"/>
        <end position="602"/>
    </location>
</feature>
<feature type="helix" evidence="45">
    <location>
        <begin position="603"/>
        <end position="619"/>
    </location>
</feature>
<feature type="strand" evidence="45">
    <location>
        <begin position="625"/>
        <end position="627"/>
    </location>
</feature>
<feature type="strand" evidence="44">
    <location>
        <begin position="630"/>
        <end position="633"/>
    </location>
</feature>
<feature type="helix" evidence="45">
    <location>
        <begin position="637"/>
        <end position="641"/>
    </location>
</feature>
<feature type="helix" evidence="45">
    <location>
        <begin position="643"/>
        <end position="645"/>
    </location>
</feature>
<feature type="helix" evidence="45">
    <location>
        <begin position="649"/>
        <end position="659"/>
    </location>
</feature>
<feature type="helix" evidence="45">
    <location>
        <begin position="660"/>
        <end position="664"/>
    </location>
</feature>
<feature type="strand" evidence="45">
    <location>
        <begin position="679"/>
        <end position="681"/>
    </location>
</feature>
<feature type="helix" evidence="45">
    <location>
        <begin position="688"/>
        <end position="720"/>
    </location>
</feature>
<feature type="helix" evidence="45">
    <location>
        <begin position="722"/>
        <end position="751"/>
    </location>
</feature>
<feature type="helix" evidence="45">
    <location>
        <begin position="756"/>
        <end position="762"/>
    </location>
</feature>
<feature type="helix" evidence="45">
    <location>
        <begin position="766"/>
        <end position="799"/>
    </location>
</feature>
<feature type="helix" evidence="45">
    <location>
        <begin position="801"/>
        <end position="825"/>
    </location>
</feature>
<feature type="turn" evidence="45">
    <location>
        <begin position="826"/>
        <end position="832"/>
    </location>
</feature>
<feature type="helix" evidence="45">
    <location>
        <begin position="834"/>
        <end position="844"/>
    </location>
</feature>
<feature type="helix" evidence="45">
    <location>
        <begin position="853"/>
        <end position="855"/>
    </location>
</feature>
<feature type="helix" evidence="45">
    <location>
        <begin position="860"/>
        <end position="863"/>
    </location>
</feature>
<feature type="helix" evidence="43">
    <location>
        <begin position="872"/>
        <end position="875"/>
    </location>
</feature>
<feature type="strand" evidence="43">
    <location>
        <begin position="878"/>
        <end position="884"/>
    </location>
</feature>
<feature type="strand" evidence="43">
    <location>
        <begin position="887"/>
        <end position="890"/>
    </location>
</feature>
<feature type="strand" evidence="43">
    <location>
        <begin position="897"/>
        <end position="900"/>
    </location>
</feature>
<feature type="strand" evidence="30">
    <location>
        <begin position="904"/>
        <end position="906"/>
    </location>
</feature>
<feature type="strand" evidence="31">
    <location>
        <begin position="908"/>
        <end position="910"/>
    </location>
</feature>
<feature type="strand" evidence="43">
    <location>
        <begin position="914"/>
        <end position="919"/>
    </location>
</feature>
<feature type="strand" evidence="43">
    <location>
        <begin position="924"/>
        <end position="927"/>
    </location>
</feature>
<feature type="helix" evidence="43">
    <location>
        <begin position="930"/>
        <end position="932"/>
    </location>
</feature>
<feature type="strand" evidence="43">
    <location>
        <begin position="935"/>
        <end position="938"/>
    </location>
</feature>
<feature type="strand" evidence="43">
    <location>
        <begin position="941"/>
        <end position="948"/>
    </location>
</feature>
<feature type="helix" evidence="43">
    <location>
        <begin position="955"/>
        <end position="957"/>
    </location>
</feature>
<feature type="strand" evidence="43">
    <location>
        <begin position="962"/>
        <end position="969"/>
    </location>
</feature>
<feature type="strand" evidence="43">
    <location>
        <begin position="972"/>
        <end position="979"/>
    </location>
</feature>
<feature type="strand" evidence="43">
    <location>
        <begin position="982"/>
        <end position="988"/>
    </location>
</feature>
<feature type="strand" evidence="30">
    <location>
        <begin position="990"/>
        <end position="992"/>
    </location>
</feature>
<feature type="strand" evidence="43">
    <location>
        <begin position="994"/>
        <end position="1000"/>
    </location>
</feature>
<feature type="strand" evidence="43">
    <location>
        <begin position="1003"/>
        <end position="1007"/>
    </location>
</feature>
<feature type="strand" evidence="43">
    <location>
        <begin position="1015"/>
        <end position="1021"/>
    </location>
</feature>
<feature type="strand" evidence="43">
    <location>
        <begin position="1025"/>
        <end position="1031"/>
    </location>
</feature>
<feature type="strand" evidence="43">
    <location>
        <begin position="1034"/>
        <end position="1040"/>
    </location>
</feature>
<feature type="strand" evidence="43">
    <location>
        <begin position="1051"/>
        <end position="1059"/>
    </location>
</feature>
<feature type="strand" evidence="43">
    <location>
        <begin position="1066"/>
        <end position="1077"/>
    </location>
</feature>
<feature type="helix" evidence="43">
    <location>
        <begin position="1081"/>
        <end position="1091"/>
    </location>
</feature>
<feature type="strand" evidence="43">
    <location>
        <begin position="1102"/>
        <end position="1104"/>
    </location>
</feature>
<feature type="strand" evidence="30">
    <location>
        <begin position="1106"/>
        <end position="1108"/>
    </location>
</feature>
<feature type="strand" evidence="43">
    <location>
        <begin position="1110"/>
        <end position="1118"/>
    </location>
</feature>
<feature type="strand" evidence="43">
    <location>
        <begin position="1122"/>
        <end position="1129"/>
    </location>
</feature>
<feature type="strand" evidence="43">
    <location>
        <begin position="1134"/>
        <end position="1138"/>
    </location>
</feature>
<feature type="strand" evidence="43">
    <location>
        <begin position="1142"/>
        <end position="1145"/>
    </location>
</feature>
<feature type="turn" evidence="43">
    <location>
        <begin position="1146"/>
        <end position="1148"/>
    </location>
</feature>
<feature type="strand" evidence="43">
    <location>
        <begin position="1149"/>
        <end position="1152"/>
    </location>
</feature>
<feature type="strand" evidence="43">
    <location>
        <begin position="1160"/>
        <end position="1164"/>
    </location>
</feature>
<feature type="strand" evidence="43">
    <location>
        <begin position="1179"/>
        <end position="1186"/>
    </location>
</feature>
<feature type="strand" evidence="43">
    <location>
        <begin position="1189"/>
        <end position="1195"/>
    </location>
</feature>
<feature type="strand" evidence="43">
    <location>
        <begin position="1202"/>
        <end position="1205"/>
    </location>
</feature>
<feature type="strand" evidence="43">
    <location>
        <begin position="1207"/>
        <end position="1209"/>
    </location>
</feature>
<feature type="helix" evidence="43">
    <location>
        <begin position="1211"/>
        <end position="1213"/>
    </location>
</feature>
<feature type="strand" evidence="43">
    <location>
        <begin position="1220"/>
        <end position="1223"/>
    </location>
</feature>
<feature type="strand" evidence="30">
    <location>
        <begin position="1225"/>
        <end position="1227"/>
    </location>
</feature>
<feature type="turn" evidence="30">
    <location>
        <begin position="1228"/>
        <end position="1230"/>
    </location>
</feature>
<feature type="strand" evidence="43">
    <location>
        <begin position="1237"/>
        <end position="1240"/>
    </location>
</feature>
<feature type="strand" evidence="43">
    <location>
        <begin position="1246"/>
        <end position="1255"/>
    </location>
</feature>
<feature type="strand" evidence="43">
    <location>
        <begin position="1258"/>
        <end position="1264"/>
    </location>
</feature>
<feature type="helix" evidence="43">
    <location>
        <begin position="1266"/>
        <end position="1273"/>
    </location>
</feature>
<feature type="strand" evidence="43">
    <location>
        <begin position="1281"/>
        <end position="1285"/>
    </location>
</feature>
<feature type="turn" evidence="37">
    <location>
        <begin position="1289"/>
        <end position="1291"/>
    </location>
</feature>
<keyword id="KW-0002">3D-structure</keyword>
<keyword id="KW-0903">Direct protein sequencing</keyword>
<keyword id="KW-1015">Disulfide bond</keyword>
<keyword id="KW-1032">Host cell membrane</keyword>
<keyword id="KW-1035">Host cytoplasm</keyword>
<keyword id="KW-1036">Host cytoplasmic vesicle</keyword>
<keyword id="KW-1043">Host membrane</keyword>
<keyword id="KW-1051">Host synapse</keyword>
<keyword id="KW-0378">Hydrolase</keyword>
<keyword id="KW-0472">Membrane</keyword>
<keyword id="KW-0479">Metal-binding</keyword>
<keyword id="KW-0482">Metalloprotease</keyword>
<keyword id="KW-0528">Neurotoxin</keyword>
<keyword id="KW-0582">Pharmaceutical</keyword>
<keyword id="KW-0645">Protease</keyword>
<keyword id="KW-1185">Reference proteome</keyword>
<keyword id="KW-0964">Secreted</keyword>
<keyword id="KW-0800">Toxin</keyword>
<keyword id="KW-0812">Transmembrane</keyword>
<keyword id="KW-1133">Transmembrane helix</keyword>
<keyword id="KW-0843">Virulence</keyword>
<keyword id="KW-0862">Zinc</keyword>
<sequence length="1296" mass="149426">MPFVNKQFNYKDPVNGVDIAYIKIPNAGQMQPVKAFKIHNKIWVIPERDTFTNPEEGDLNPPPEAKQVPVSYYDSTYLSTDNEKDNYLKGVTKLFERIYSTDLGRMLLTSIVRGIPFWGGSTIDTELKVIDTNCINVIQPDGSYRSEELNLVIIGPSADIIQFECKSFGHEVLNLTRNGYGSTQYIRFSPDFTFGFEESLEVDTNPLLGAGKFATDPAVTLAHELIHAGHRLYGIAINPNRVFKVNTNAYYEMSGLEVSFEELRTFGGHDAKFIDSLQENEFRLYYYNKFKDIASTLNKAKSIVGTTASLQYMKNVFKEKYLLSEDTSGKFSVDKLKFDKLYKMLTEIYTEDNFVKFFKVLNRKTYLNFDKAVFKINIVPKVNYTIYDGFNLRNTNLAANFNGQNTEINNMNFTKLKNFTGLFEFYKLLCVRGIITSKTKSLDKGYNKALNDLCIKVNNWDLFFSPSEDNFTNDLNKGEEITSDTNIEAAEENISLDLIQQYYLTFNFDNEPENISIENLSSDIIGQLELMPNIERFPNGKKYELDKYTMFHYLRAQEFEHGKSRIALTNSVNEALLNPSRVYTFFSSDYVKKVNKATEAAMFLGWVEQLVYDFTDETSEVSTTDKIADITIIIPYIGPALNIGNMLYKDDFVGALIFSGAVILLEFIPEIAIPVLGTFALVSYIANKVLTVQTIDNALSKRNEKWDEVYKYIVTNWLAKVNTQIDLIRKKMKEALENQAEATKAIINYQYNQYTEEEKNNINFNIDDLSSKLNESINKAMININKFLNQCSVSYLMNSMIPYGVKRLEDFDASLKDALLKYIYDNRGTLIGQVDRLKDKVNNTLSTDIPFQLSKYVDNQRLLSTFTEYIKNIINTSILNLRYESNHLIDLSRYASKINIGSKVNFDPIDKNQIQLFNLESSKIEVILKNAIVYNSMYENFSTSFWIRIPKYFNSISLNNEYTIINCMENNSGWKVSLNYGEIIWTLQDTQEIKQRVVFKYSQMINISDYINRWIFVTITNNRLNNSKIYINGRLIDQKPISNLGNIHASNNIMFKLDGCRDTHRYIWIKYFNLFDKELNEKEIKDLYDNQSNSGILKDFWGDYLQYDKPYYMLNLYDPNKYVDVNNVGIRGYMYLKGPRGSVMTTNIYLNSSLYRGTKFIIKKYASGNKDNIVRNNDRVYINVVVKNKEYRLATNASQAGVEKILSALEIPDVGNLSQVVVMKSKNDQGITNKCKMNLQDNNGNDIGFIGFHQFNNIAKLVASNWYNRQIERSSRTLGCSWEFIPVDDGWGERPL</sequence>
<proteinExistence type="evidence at protein level"/>
<name>BXA1_CLOBH</name>
<accession>P0DPI1</accession>
<accession>A5HZZ9</accession>
<accession>A7G1U9</accession>
<accession>P01561</accession>
<accession>P10845</accession>
<accession>P18639</accession>
<protein>
    <recommendedName>
        <fullName>Botulinum neurotoxin type A</fullName>
        <shortName>BoNT/A</shortName>
    </recommendedName>
    <alternativeName>
        <fullName>Bontoxilysin-A</fullName>
        <shortName>BOTOX</shortName>
    </alternativeName>
    <component>
        <recommendedName>
            <fullName>Botulinum neurotoxin A light chain</fullName>
            <shortName>LC</shortName>
            <ecNumber evidence="10">3.4.24.69</ecNumber>
        </recommendedName>
    </component>
    <component>
        <recommendedName>
            <fullName>Botulinum neurotoxin A heavy chain</fullName>
            <shortName>HC</shortName>
        </recommendedName>
    </component>
</protein>
<organism>
    <name type="scientific">Clostridium botulinum (strain Hall / ATCC 3502 / NCTC 13319 / Type A)</name>
    <dbReference type="NCBI Taxonomy" id="441771"/>
    <lineage>
        <taxon>Bacteria</taxon>
        <taxon>Bacillati</taxon>
        <taxon>Bacillota</taxon>
        <taxon>Clostridia</taxon>
        <taxon>Eubacteriales</taxon>
        <taxon>Clostridiaceae</taxon>
        <taxon>Clostridium</taxon>
    </lineage>
</organism>
<comment type="function">
    <molecule>Botulinum neurotoxin type A</molecule>
    <text evidence="1 6 10">Botulinum toxin causes flaccid paralysis by inhibiting neurotransmitter (acetylcholine) release from the presynaptic membranes of nerve terminals of the eukaryotic host skeletal and autonomic nervous system, with frequent heart or respiratory failure (PubMed:8103915). Precursor of botulinum neurotoxin A which has 2 coreceptors; complex polysialylated gangliosides found on neural tissue and specific membrane-anchored proteins of synaptic vesicles (By similarity). Receptor proteins are exposed on host presynaptic cell membrane during neurotransmitter release, when the toxin heavy chain (HC) binds to them (PubMed:19476346). Upon synaptic vesicle recycling the toxin is taken up via the endocytic pathway (By similarity). When the pH of the toxin-containing endosome drops a structural rearrangement occurs so that the N-terminus of the HC forms pores that allows the light chain (LC) to translocate into the cytosol (By similarity). Once in the cytosol the disulfide bond linking the 2 subunits is reduced and LC cleaves its target protein on synaptic vesicles, preventing their fusion with the cytoplasmic membrane and thus neurotransmitter release (By similarity).</text>
</comment>
<comment type="function">
    <molecule>Botulinum neurotoxin A light chain</molecule>
    <text evidence="10 11 17">Has proteolytic activity (PubMed:8103915, PubMed:8294407). In vitro the whole toxin is reduced to release LC (PubMed:8103915, PubMed:8294407). After translocation into the eukaryotic host cytosol, LC hydrolyzes the 197-Gln-|-Arg-198 bond in SNAP25, blocking neurotransmitter release (PubMed:8103915, PubMed:8294407).</text>
</comment>
<comment type="function">
    <molecule>Botulinum neurotoxin A heavy chain</molecule>
    <text evidence="1 5 6 8 12">Responsible for host epithelial cell transcytosis, host nerve cell targeting and translocation of light chain (LC) into host cytosol. Composed of 3 subdomains; the translocation domain (TD), and N-terminus and C-terminus of the receptor-binding domain (RBD) (PubMed:17173035, PubMed:9783750). The RBD is responsible for the adherence of the toxin to the cell surface. It simultaneously recognizes 2 coreceptors; polysialated gangliosides and synaptic vesicle glycoproteins SV2A, SV2B and SV2C in close proximity on host synaptic vesicles (By similarity). The RBD specifically recognizes the N-linked glycan on 'Asn-559' of SV2A, SV2B and SV2C (By similarity). Isolated HC binds to host synaptosomes, significantly decreases uptake and toxicity of whole BoNT/A (PubMed:19476346). Binds ganglioside GD1a in vitro (PubMed:21849494). The N-terminus of the TD wraps an extended belt around the perimeter of the LC, protecting Zn(2+) in the active site; it may also prevent premature LC dissociation from the translocation channel and to protect toxin prior to translocation (PubMed:9783750). The TD inserts into synaptic vesicle membrane to allow translocation into the host cytosol (By similarity).</text>
</comment>
<comment type="catalytic activity">
    <reaction evidence="10 11">
        <text>Limited hydrolysis of proteins of the neuroexocytosis apparatus, synaptobrevins, SNAP25 or syntaxin. No detected action on small molecule substrates.</text>
        <dbReference type="EC" id="3.4.24.69"/>
    </reaction>
</comment>
<comment type="cofactor">
    <cofactor evidence="5 7 12">
        <name>Zn(2+)</name>
        <dbReference type="ChEBI" id="CHEBI:29105"/>
    </cofactor>
    <text evidence="5 7 12">Binds 1 zinc ion per subunit (PubMed:17173035, PubMed:21434688, PubMed:9783750).</text>
</comment>
<comment type="activity regulation">
    <text evidence="7 10">SNAP25 proteolysis is inhibited by 1,10-phenanthroline and 2,2'-dipyridyl but not EDTA (PubMed:8103915). Inhibited by hydroxamate compounds with halogenated benzene-containing arms which directly bind the zinc ion (PubMed:21434688).</text>
</comment>
<comment type="subunit">
    <text evidence="1 5 6 12">Heterodimer; disulfide-linked heterodimer of a light chain (LC) and a heavy chain (HC) (PubMed:17173035, PubMed:9783750). Interacts with host synaptic vesicle glycoproteins SV2A, SV2B and SV2C which serve as coreceptors (By similarity). Glycosylation of 'Asn-559' in SV2C probably contributes a 12-fold increase in affinity to this interaction (By similarity). Depolarization of target tissue with high levels of K(+) leads to greater levels of receptor exposure (PubMed:19476346).</text>
</comment>
<comment type="subcellular location">
    <molecule>Botulinum neurotoxin A light chain</molecule>
    <subcellularLocation>
        <location evidence="21">Secreted</location>
    </subcellularLocation>
    <subcellularLocation>
        <location evidence="19 20">Host cytoplasm</location>
        <location evidence="19 20">Host cytosol</location>
    </subcellularLocation>
</comment>
<comment type="subcellular location">
    <molecule>Botulinum neurotoxin A heavy chain</molecule>
    <subcellularLocation>
        <location evidence="21">Secreted</location>
    </subcellularLocation>
    <subcellularLocation>
        <location evidence="6">Host synapse</location>
        <location evidence="6">Host presynaptic cell membrane</location>
    </subcellularLocation>
    <subcellularLocation>
        <location evidence="17">Host cytoplasmic vesicle</location>
        <location evidence="17">Host secretory vesicle</location>
        <location evidence="17">Host synaptic vesicle membrane</location>
        <topology evidence="15">Multi-pass membrane protein</topology>
    </subcellularLocation>
</comment>
<comment type="domain">
    <molecule>Botulinum neurotoxin A light chain</molecule>
    <text evidence="10 11">Has protease activity (PubMed:8103915, PubMed:8294407).</text>
</comment>
<comment type="domain">
    <molecule>Botulinum neurotoxin A heavy chain</molecule>
    <text evidence="5 6 12">Has 3 functional domains; the translocation domain (TD) and the receptor-binding domain (RBD) which is further subdivided into N- and C-terminal domains (N-RBD and C-RBD) (PubMed:17173035, PubMed:19476346). The N-terminus of the TD wraps an extended belt around the perimeter of the LC, protecting Zn(2+) in the active site and may be a pseudosubstrate inhibitor which serves as an intramolecular chaperone for the LC prior to its translocation into the host cytosol (PubMed:9783750). The RBD binds transiently exposed coreceptors on the host presynaptic cell membrane (PubMed:19476346).</text>
</comment>
<comment type="PTM">
    <text evidence="1">In a bacterial culture the precursor chain is initally cleaved on the amino side of Gly-445 and is processed more slowly between Lys-448 and Ala-449 to give the final mature heavy chain sequence.</text>
</comment>
<comment type="pharmaceutical">
    <text evidence="18">Available under the name Botox (onabotulinumtoxinA, Allergan), Dysport (abobotulinumtoxinA, Ipsen Biopharmaceuticals) and Xeomin (incobotulinumtoxinA, Merz Pharmaceuticals) for the treatment of strabismus and blepharospasm associated with dystonia and cervical dystonia. Used for the treatment of hemifacial spasm and a number of other neurological disorders characterized by abnormal muscle contraction. It is also used cosmetically to smooth facial wrinkles.</text>
</comment>
<comment type="miscellaneous">
    <text>There are seven antigenically distinct forms of botulinum neurotoxin: Types A, B, C, D, E, F, and G; new subtypes are quite frequent.</text>
</comment>
<comment type="miscellaneous">
    <text evidence="1">Botulism poisoning is usually food-borne, either by ingesting toxin or bacterial-contaminated food, or less frequently by inhalation poisoning. In both cases the neurotoxin binds to the apical surface of epithelial cells in the gut or airway. Toxin undergoes receptor-mediated endocytosis (using a different receptor than on target nerve cells), transcytosis across the epithelial cells and release into the general circulation. Once in the general circulation it binds to its target cells.</text>
</comment>
<comment type="miscellaneous">
    <text evidence="4">Types A, B and E are the most frequent cause of adult human foodborne botulism; type A is the most severe, while type E has the shortest incubation period (PubMed:1431246).</text>
</comment>
<comment type="miscellaneous">
    <text evidence="9">Neurotoxin type A is released from bacteria in the two-chain form (PubMed:4030755).</text>
</comment>
<comment type="miscellaneous">
    <text evidence="5">Neutralizing antibodies are used to treat botulism; in at least 2 cases they bind to HC.</text>
</comment>
<comment type="similarity">
    <text evidence="15">Belongs to the peptidase M27 family.</text>
</comment>
<comment type="online information" name="BOTOX product information Web site">
    <link uri="https://www.botox.com/"/>
</comment>
<comment type="online information" name="Protein Spotlight">
    <link uri="https://www.proteinspotlight.org/back_issues/019"/>
    <text>From sausages to wrinkles - Issue 19 of February 2002</text>
</comment>
<comment type="online information" name="BotDB - A Database Resource for Clostridial Neurotoxins">
    <link uri="https://botdb.abcc.ncifcrf.gov/"/>
</comment>